<proteinExistence type="evidence at transcript level"/>
<keyword id="KW-0050">Antiport</keyword>
<keyword id="KW-0968">Cytoplasmic vesicle</keyword>
<keyword id="KW-0333">Golgi apparatus</keyword>
<keyword id="KW-0406">Ion transport</keyword>
<keyword id="KW-0472">Membrane</keyword>
<keyword id="KW-0479">Metal-binding</keyword>
<keyword id="KW-1185">Reference proteome</keyword>
<keyword id="KW-0812">Transmembrane</keyword>
<keyword id="KW-1133">Transmembrane helix</keyword>
<keyword id="KW-0813">Transport</keyword>
<keyword id="KW-0862">Zinc</keyword>
<keyword id="KW-0864">Zinc transport</keyword>
<accession>Q6DG36</accession>
<gene>
    <name type="primary">slc30a5</name>
    <name type="synonym">znt5</name>
</gene>
<name>ZNT5_DANRE</name>
<dbReference type="EMBL" id="BC076517">
    <property type="protein sequence ID" value="AAH76517.1"/>
    <property type="molecule type" value="mRNA"/>
</dbReference>
<dbReference type="RefSeq" id="NP_001002322.1">
    <property type="nucleotide sequence ID" value="NM_001002322.1"/>
</dbReference>
<dbReference type="SMR" id="Q6DG36"/>
<dbReference type="FunCoup" id="Q6DG36">
    <property type="interactions" value="558"/>
</dbReference>
<dbReference type="STRING" id="7955.ENSDARP00000068124"/>
<dbReference type="PaxDb" id="7955-ENSDARP00000068124"/>
<dbReference type="Ensembl" id="ENSDART00000073634">
    <property type="protein sequence ID" value="ENSDARP00000068124"/>
    <property type="gene ID" value="ENSDARG00000051921"/>
</dbReference>
<dbReference type="GeneID" id="436594"/>
<dbReference type="KEGG" id="dre:436594"/>
<dbReference type="AGR" id="ZFIN:ZDB-GENE-040718-6"/>
<dbReference type="CTD" id="64924"/>
<dbReference type="ZFIN" id="ZDB-GENE-040718-6">
    <property type="gene designation" value="slc30a5"/>
</dbReference>
<dbReference type="eggNOG" id="KOG1484">
    <property type="taxonomic scope" value="Eukaryota"/>
</dbReference>
<dbReference type="HOGENOM" id="CLU_013430_11_0_1"/>
<dbReference type="InParanoid" id="Q6DG36"/>
<dbReference type="OMA" id="NHLFYHF"/>
<dbReference type="OrthoDB" id="78669at2759"/>
<dbReference type="PhylomeDB" id="Q6DG36"/>
<dbReference type="TreeFam" id="TF315217"/>
<dbReference type="Reactome" id="R-DRE-264876">
    <property type="pathway name" value="Insulin processing"/>
</dbReference>
<dbReference type="Reactome" id="R-DRE-435368">
    <property type="pathway name" value="Zinc efflux and compartmentalization by the SLC30 family"/>
</dbReference>
<dbReference type="PRO" id="PR:Q6DG36"/>
<dbReference type="Proteomes" id="UP000000437">
    <property type="component" value="Chromosome 5"/>
</dbReference>
<dbReference type="Bgee" id="ENSDARG00000051921">
    <property type="expression patterns" value="Expressed in testis and 29 other cell types or tissues"/>
</dbReference>
<dbReference type="GO" id="GO:0031410">
    <property type="term" value="C:cytoplasmic vesicle"/>
    <property type="evidence" value="ECO:0000318"/>
    <property type="project" value="GO_Central"/>
</dbReference>
<dbReference type="GO" id="GO:0005789">
    <property type="term" value="C:endoplasmic reticulum membrane"/>
    <property type="evidence" value="ECO:0000250"/>
    <property type="project" value="UniProtKB"/>
</dbReference>
<dbReference type="GO" id="GO:0012507">
    <property type="term" value="C:ER to Golgi transport vesicle membrane"/>
    <property type="evidence" value="ECO:0000250"/>
    <property type="project" value="UniProtKB"/>
</dbReference>
<dbReference type="GO" id="GO:0005794">
    <property type="term" value="C:Golgi apparatus"/>
    <property type="evidence" value="ECO:0000250"/>
    <property type="project" value="UniProtKB"/>
</dbReference>
<dbReference type="GO" id="GO:1990674">
    <property type="term" value="C:Golgi cis cisterna membrane"/>
    <property type="evidence" value="ECO:0000250"/>
    <property type="project" value="UniProtKB"/>
</dbReference>
<dbReference type="GO" id="GO:0000139">
    <property type="term" value="C:Golgi membrane"/>
    <property type="evidence" value="ECO:0000250"/>
    <property type="project" value="UniProtKB"/>
</dbReference>
<dbReference type="GO" id="GO:0030667">
    <property type="term" value="C:secretory granule membrane"/>
    <property type="evidence" value="ECO:0000250"/>
    <property type="project" value="UniProtKB"/>
</dbReference>
<dbReference type="GO" id="GO:0032588">
    <property type="term" value="C:trans-Golgi network membrane"/>
    <property type="evidence" value="ECO:0000250"/>
    <property type="project" value="UniProtKB"/>
</dbReference>
<dbReference type="GO" id="GO:0046872">
    <property type="term" value="F:metal ion binding"/>
    <property type="evidence" value="ECO:0007669"/>
    <property type="project" value="UniProtKB-KW"/>
</dbReference>
<dbReference type="GO" id="GO:0005385">
    <property type="term" value="F:zinc ion transmembrane transporter activity"/>
    <property type="evidence" value="ECO:0000250"/>
    <property type="project" value="ZFIN"/>
</dbReference>
<dbReference type="GO" id="GO:0140826">
    <property type="term" value="F:zinc:proton antiporter activity"/>
    <property type="evidence" value="ECO:0000250"/>
    <property type="project" value="UniProtKB"/>
</dbReference>
<dbReference type="GO" id="GO:0006506">
    <property type="term" value="P:GPI anchor biosynthetic process"/>
    <property type="evidence" value="ECO:0000250"/>
    <property type="project" value="UniProtKB"/>
</dbReference>
<dbReference type="GO" id="GO:0006882">
    <property type="term" value="P:intracellular zinc ion homeostasis"/>
    <property type="evidence" value="ECO:0000318"/>
    <property type="project" value="GO_Central"/>
</dbReference>
<dbReference type="GO" id="GO:0010043">
    <property type="term" value="P:response to zinc ion"/>
    <property type="evidence" value="ECO:0000314"/>
    <property type="project" value="ZFIN"/>
</dbReference>
<dbReference type="GO" id="GO:1904257">
    <property type="term" value="P:zinc ion import into Golgi lumen"/>
    <property type="evidence" value="ECO:0000250"/>
    <property type="project" value="UniProtKB"/>
</dbReference>
<dbReference type="GO" id="GO:0062111">
    <property type="term" value="P:zinc ion import into organelle"/>
    <property type="evidence" value="ECO:0000250"/>
    <property type="project" value="UniProtKB"/>
</dbReference>
<dbReference type="GO" id="GO:0006829">
    <property type="term" value="P:zinc ion transport"/>
    <property type="evidence" value="ECO:0000250"/>
    <property type="project" value="ZFIN"/>
</dbReference>
<dbReference type="Gene3D" id="1.20.1510.10">
    <property type="entry name" value="Cation efflux protein transmembrane domain"/>
    <property type="match status" value="1"/>
</dbReference>
<dbReference type="InterPro" id="IPR002524">
    <property type="entry name" value="Cation_efflux"/>
</dbReference>
<dbReference type="InterPro" id="IPR027469">
    <property type="entry name" value="Cation_efflux_TMD_sf"/>
</dbReference>
<dbReference type="InterPro" id="IPR045316">
    <property type="entry name" value="Msc2-like"/>
</dbReference>
<dbReference type="NCBIfam" id="TIGR01297">
    <property type="entry name" value="CDF"/>
    <property type="match status" value="1"/>
</dbReference>
<dbReference type="PANTHER" id="PTHR45755">
    <property type="match status" value="1"/>
</dbReference>
<dbReference type="PANTHER" id="PTHR45755:SF1">
    <property type="entry name" value="PROTON-COUPLED ZINC ANTIPORTER SLC30A5"/>
    <property type="match status" value="1"/>
</dbReference>
<dbReference type="Pfam" id="PF01545">
    <property type="entry name" value="Cation_efflux"/>
    <property type="match status" value="1"/>
</dbReference>
<dbReference type="SUPFAM" id="SSF161111">
    <property type="entry name" value="Cation efflux protein transmembrane domain-like"/>
    <property type="match status" value="1"/>
</dbReference>
<organism>
    <name type="scientific">Danio rerio</name>
    <name type="common">Zebrafish</name>
    <name type="synonym">Brachydanio rerio</name>
    <dbReference type="NCBI Taxonomy" id="7955"/>
    <lineage>
        <taxon>Eukaryota</taxon>
        <taxon>Metazoa</taxon>
        <taxon>Chordata</taxon>
        <taxon>Craniata</taxon>
        <taxon>Vertebrata</taxon>
        <taxon>Euteleostomi</taxon>
        <taxon>Actinopterygii</taxon>
        <taxon>Neopterygii</taxon>
        <taxon>Teleostei</taxon>
        <taxon>Ostariophysi</taxon>
        <taxon>Cypriniformes</taxon>
        <taxon>Danionidae</taxon>
        <taxon>Danioninae</taxon>
        <taxon>Danio</taxon>
    </lineage>
</organism>
<feature type="chain" id="PRO_0000314296" description="Proton-coupled zinc antiporter SLC30A5">
    <location>
        <begin position="1"/>
        <end position="775"/>
    </location>
</feature>
<feature type="topological domain" description="Cytoplasmic" evidence="5">
    <location>
        <begin position="1"/>
        <end position="28"/>
    </location>
</feature>
<feature type="transmembrane region" description="Helical" evidence="3">
    <location>
        <begin position="29"/>
        <end position="49"/>
    </location>
</feature>
<feature type="topological domain" description="Lumenal" evidence="5">
    <location>
        <begin position="50"/>
        <end position="52"/>
    </location>
</feature>
<feature type="transmembrane region" description="Helical" evidence="3">
    <location>
        <begin position="53"/>
        <end position="73"/>
    </location>
</feature>
<feature type="topological domain" description="Cytoplasmic" evidence="5">
    <location>
        <begin position="74"/>
        <end position="94"/>
    </location>
</feature>
<feature type="transmembrane region" description="Helical" evidence="3">
    <location>
        <begin position="95"/>
        <end position="115"/>
    </location>
</feature>
<feature type="topological domain" description="Lumenal" evidence="5">
    <location>
        <position position="116"/>
    </location>
</feature>
<feature type="transmembrane region" description="Helical" evidence="3">
    <location>
        <begin position="117"/>
        <end position="137"/>
    </location>
</feature>
<feature type="topological domain" description="Cytoplasmic" evidence="5">
    <location>
        <begin position="138"/>
        <end position="148"/>
    </location>
</feature>
<feature type="transmembrane region" description="Helical" evidence="3">
    <location>
        <begin position="149"/>
        <end position="169"/>
    </location>
</feature>
<feature type="topological domain" description="Lumenal" evidence="5">
    <location>
        <begin position="170"/>
        <end position="189"/>
    </location>
</feature>
<feature type="transmembrane region" description="Helical" evidence="3">
    <location>
        <begin position="190"/>
        <end position="210"/>
    </location>
</feature>
<feature type="topological domain" description="Cytoplasmic" evidence="5">
    <location>
        <begin position="211"/>
        <end position="232"/>
    </location>
</feature>
<feature type="transmembrane region" description="Helical" evidence="3">
    <location>
        <begin position="233"/>
        <end position="253"/>
    </location>
</feature>
<feature type="topological domain" description="Lumenal" evidence="5">
    <location>
        <begin position="254"/>
        <end position="263"/>
    </location>
</feature>
<feature type="transmembrane region" description="Helical" evidence="3">
    <location>
        <begin position="264"/>
        <end position="284"/>
    </location>
</feature>
<feature type="topological domain" description="Cytoplasmic" evidence="5">
    <location>
        <begin position="285"/>
        <end position="299"/>
    </location>
</feature>
<feature type="transmembrane region" description="Helical" evidence="3">
    <location>
        <begin position="300"/>
        <end position="320"/>
    </location>
</feature>
<feature type="topological domain" description="Lumenal" evidence="5">
    <location>
        <begin position="321"/>
        <end position="338"/>
    </location>
</feature>
<feature type="transmembrane region" description="Helical" evidence="3">
    <location>
        <begin position="339"/>
        <end position="359"/>
    </location>
</feature>
<feature type="topological domain" description="Cytoplasmic" evidence="5">
    <location>
        <begin position="360"/>
        <end position="414"/>
    </location>
</feature>
<feature type="transmembrane region" description="Helical" evidence="3">
    <location>
        <begin position="415"/>
        <end position="435"/>
    </location>
</feature>
<feature type="topological domain" description="Lumenal" evidence="5">
    <location>
        <begin position="436"/>
        <end position="444"/>
    </location>
</feature>
<feature type="transmembrane region" description="Helical" evidence="3">
    <location>
        <begin position="445"/>
        <end position="465"/>
    </location>
</feature>
<feature type="topological domain" description="Cytoplasmic" evidence="5">
    <location>
        <begin position="466"/>
        <end position="479"/>
    </location>
</feature>
<feature type="transmembrane region" description="Helical" evidence="3">
    <location>
        <begin position="480"/>
        <end position="500"/>
    </location>
</feature>
<feature type="topological domain" description="Lumenal" evidence="5">
    <location>
        <begin position="501"/>
        <end position="516"/>
    </location>
</feature>
<feature type="transmembrane region" description="Helical" evidence="3">
    <location>
        <begin position="517"/>
        <end position="537"/>
    </location>
</feature>
<feature type="topological domain" description="Cytoplasmic" evidence="5">
    <location>
        <begin position="538"/>
        <end position="602"/>
    </location>
</feature>
<feature type="transmembrane region" description="Helical" evidence="3">
    <location>
        <begin position="603"/>
        <end position="623"/>
    </location>
</feature>
<feature type="topological domain" description="Lumenal" evidence="5">
    <location>
        <begin position="624"/>
        <end position="627"/>
    </location>
</feature>
<feature type="transmembrane region" description="Helical" evidence="3">
    <location>
        <begin position="628"/>
        <end position="648"/>
    </location>
</feature>
<feature type="topological domain" description="Cytoplasmic" evidence="5">
    <location>
        <begin position="649"/>
        <end position="775"/>
    </location>
</feature>
<feature type="region of interest" description="His-rich loop; required for zinc transport" evidence="2">
    <location>
        <begin position="538"/>
        <end position="584"/>
    </location>
</feature>
<feature type="region of interest" description="Disordered" evidence="4">
    <location>
        <begin position="547"/>
        <end position="592"/>
    </location>
</feature>
<feature type="compositionally biased region" description="Basic residues" evidence="4">
    <location>
        <begin position="571"/>
        <end position="589"/>
    </location>
</feature>
<feature type="binding site" evidence="1">
    <location>
        <position position="447"/>
    </location>
    <ligand>
        <name>Zn(2+)</name>
        <dbReference type="ChEBI" id="CHEBI:29105"/>
        <note>transported zinc</note>
    </ligand>
</feature>
<feature type="binding site" evidence="1">
    <location>
        <position position="451"/>
    </location>
    <ligand>
        <name>Zn(2+)</name>
        <dbReference type="ChEBI" id="CHEBI:29105"/>
        <note>transported zinc</note>
    </ligand>
</feature>
<feature type="binding site" evidence="1">
    <location>
        <position position="605"/>
    </location>
    <ligand>
        <name>Zn(2+)</name>
        <dbReference type="ChEBI" id="CHEBI:29105"/>
        <note>transported zinc</note>
    </ligand>
</feature>
<feature type="binding site" evidence="1">
    <location>
        <position position="609"/>
    </location>
    <ligand>
        <name>Zn(2+)</name>
        <dbReference type="ChEBI" id="CHEBI:29105"/>
        <note>transported zinc</note>
    </ligand>
</feature>
<evidence type="ECO:0000250" key="1">
    <source>
        <dbReference type="UniProtKB" id="Q8IWU4"/>
    </source>
</evidence>
<evidence type="ECO:0000250" key="2">
    <source>
        <dbReference type="UniProtKB" id="Q8TAD4"/>
    </source>
</evidence>
<evidence type="ECO:0000255" key="3"/>
<evidence type="ECO:0000256" key="4">
    <source>
        <dbReference type="SAM" id="MobiDB-lite"/>
    </source>
</evidence>
<evidence type="ECO:0000305" key="5"/>
<sequence length="775" mass="85103">MDEKYSSNVISSGKLGRVEAPNARLTRYIVLLYFTKMLKAFGIFESYDILKVVHIVQFLFILKMGCAVILVFFQKPFSSGKMIPKRQWIKILKHAVISCIISLLGFFGLTLCGPLRSLLLFEHSDLVVISLLSVLFTSSGGGPSKTRGAAFFIIAVICLLLFDNDDLMAKMAEHPEGHHDSALTHALYTGIAFLGVADHKGGVVLLVLALCLKVAFNTASRKLSVEIGGAKRLYALSNLVSAVVLLPWVIVLSATTESKVESWSGLIFPFAMIIFSVMILDFYVESICMAKLETSRCARYGAIFLFLNGLLLANFWTHPLTGQIRAISTTGQQSSTEHVLSGGVLVSACFFIMADSILSAPSSKGQKGTLVGYSPEGTPLYNFMGDALQHTSQSLPRFIKDSLKQILEEYDSRQIFYFLCLNLAFTFVELFYGVWTNSLGLISDGFHMLFDCSALVLGLFAALMTRWKATRIYSYGYGRVEILSGFINGLFLMVIAFFVFVESVTRLVDPPNINTDMLTPVSVGGLIVNLVGICAFSHAHSHGASKGSCSGHDHGHSHHGHGHSSMEHSHGGHGHSHGGHGHSHGHGHSHSSGGMNANMRGVFLHVLADTLGSVGVIISTILIRQFGWLIADPICSLFISTLIFLSVIPLLKDACEVLLLRMPPQHEKELNFALEKIQKIEGVLSYRDPHFWRHSASVIAGTIHLQLMSDVVEQRVIQQVSAVLKDAGVNNLTIQLEKEAYFQHMSGLSSGFHEVLTMTQQMESMKYYKDGTCIM</sequence>
<comment type="function">
    <text evidence="2">Together with SLC30A6 forms a functional proton-coupled zinc ion antiporter mediating zinc entry into the lumen of organelles along the secretory pathway. By contributing to zinc ion homeostasis within the early secretory pathway, regulates the activation and folding of enzymes like alkaline phosphatases and enzymes involved in phosphatidylinositol glycan anchor biosynthesis.</text>
</comment>
<comment type="catalytic activity">
    <reaction evidence="2">
        <text>Zn(2+)(in) + 2 H(+)(out) = Zn(2+)(out) + 2 H(+)(in)</text>
        <dbReference type="Rhea" id="RHEA:72627"/>
        <dbReference type="ChEBI" id="CHEBI:15378"/>
        <dbReference type="ChEBI" id="CHEBI:29105"/>
    </reaction>
</comment>
<comment type="subunit">
    <text evidence="2">Heterodimer with SLC30A6/ZNT6; form a functional zinc ion transmembrane transporter.</text>
</comment>
<comment type="subcellular location">
    <subcellularLocation>
        <location evidence="2">Golgi apparatus</location>
        <location evidence="2">Golgi stack membrane</location>
        <topology evidence="3">Multi-pass membrane protein</topology>
    </subcellularLocation>
    <subcellularLocation>
        <location evidence="2">Cytoplasmic vesicle</location>
        <location evidence="2">COPII-coated vesicle membrane</location>
        <topology evidence="3">Multi-pass membrane protein</topology>
    </subcellularLocation>
    <subcellularLocation>
        <location evidence="2">Cytoplasmic vesicle</location>
        <location evidence="2">Secretory vesicle membrane</location>
        <topology evidence="3">Multi-pass membrane protein</topology>
    </subcellularLocation>
    <subcellularLocation>
        <location evidence="2">Golgi apparatus</location>
        <location evidence="2">trans-Golgi network membrane</location>
        <topology evidence="3">Multi-pass membrane protein</topology>
    </subcellularLocation>
    <text evidence="2">Enriched in early compartments of the secretory pathway including COPII-coated vesicles and the Golgi cis cisterna.</text>
</comment>
<comment type="similarity">
    <text evidence="5">Belongs to the cation diffusion facilitator (CDF) transporter (TC 2.A.4) family. SLC30A subfamily.</text>
</comment>
<protein>
    <recommendedName>
        <fullName evidence="5">Proton-coupled zinc antiporter SLC30A5</fullName>
    </recommendedName>
    <alternativeName>
        <fullName>Solute carrier family 30 member 5</fullName>
    </alternativeName>
    <alternativeName>
        <fullName evidence="5">Zinc transporter 5</fullName>
        <shortName>ZnT-5</shortName>
    </alternativeName>
</protein>
<reference key="1">
    <citation type="submission" date="2004-07" db="EMBL/GenBank/DDBJ databases">
        <authorList>
            <consortium name="NIH - Zebrafish Gene Collection (ZGC) project"/>
        </authorList>
    </citation>
    <scope>NUCLEOTIDE SEQUENCE [LARGE SCALE MRNA]</scope>
    <source>
        <tissue>Embryo</tissue>
    </source>
</reference>